<keyword id="KW-0025">Alternative splicing</keyword>
<keyword id="KW-0130">Cell adhesion</keyword>
<keyword id="KW-0472">Membrane</keyword>
<keyword id="KW-1185">Reference proteome</keyword>
<comment type="function">
    <text>May play a role in axon growth and regeneration. May be involved in epidermal cell adhesion and epidermal structure and function.</text>
</comment>
<comment type="subunit">
    <text evidence="1">Heterooligomeric complex of flotillins 1 and 2.</text>
</comment>
<comment type="subcellular location">
    <subcellularLocation>
        <location evidence="1">Membrane</location>
    </subcellularLocation>
    <text evidence="1">In neuronal cells, associated with GPI-anchored cell-adhesion molecules.</text>
</comment>
<comment type="alternative products">
    <event type="alternative splicing"/>
    <isoform>
        <id>O61492-1</id>
        <name>A</name>
        <name>E</name>
        <sequence type="displayed"/>
    </isoform>
    <isoform>
        <id>O61492-2</id>
        <name>B</name>
        <name>F</name>
        <sequence type="described" ref="VSP_000509"/>
    </isoform>
    <isoform>
        <id>O61492-3</id>
        <name>C</name>
        <sequence type="described" ref="VSP_000507"/>
    </isoform>
    <isoform>
        <id>O61492-4</id>
        <name>D</name>
        <sequence type="described" ref="VSP_000508"/>
    </isoform>
</comment>
<comment type="similarity">
    <text evidence="5">Belongs to the band 7/mec-2 family. Flotillin subfamily.</text>
</comment>
<name>FLOT2_DROME</name>
<organism>
    <name type="scientific">Drosophila melanogaster</name>
    <name type="common">Fruit fly</name>
    <dbReference type="NCBI Taxonomy" id="7227"/>
    <lineage>
        <taxon>Eukaryota</taxon>
        <taxon>Metazoa</taxon>
        <taxon>Ecdysozoa</taxon>
        <taxon>Arthropoda</taxon>
        <taxon>Hexapoda</taxon>
        <taxon>Insecta</taxon>
        <taxon>Pterygota</taxon>
        <taxon>Neoptera</taxon>
        <taxon>Endopterygota</taxon>
        <taxon>Diptera</taxon>
        <taxon>Brachycera</taxon>
        <taxon>Muscomorpha</taxon>
        <taxon>Ephydroidea</taxon>
        <taxon>Drosophilidae</taxon>
        <taxon>Drosophila</taxon>
        <taxon>Sophophora</taxon>
    </lineage>
</organism>
<feature type="chain" id="PRO_0000094055" description="Flotillin-2">
    <location>
        <begin position="1"/>
        <end position="438"/>
    </location>
</feature>
<feature type="splice variant" id="VSP_000508" description="In isoform D." evidence="5">
    <location>
        <begin position="1"/>
        <end position="157"/>
    </location>
</feature>
<feature type="splice variant" id="VSP_000507" description="In isoform C." evidence="2">
    <original>MGNIHTTGPNEALIVSGGCCGSTKKRTIVGGWAWAWWLVTDVQRLSLNVMTLNPMCENVETSQGVPLTVTGVAQCKIMKSSSYKQTDYHNDE</original>
    <variation>MPSHTCTPTRGHSHNETTHTHTHTQTLTHTHTNTLTHTHKHKHVQMMNVYYFHHQ</variation>
    <location>
        <begin position="1"/>
        <end position="92"/>
    </location>
</feature>
<feature type="splice variant" id="VSP_000509" description="In isoform B." evidence="3 4">
    <location>
        <begin position="80"/>
        <end position="92"/>
    </location>
</feature>
<feature type="sequence conflict" description="In Ref. 1; AAC39013." evidence="5" ref="1">
    <original>A</original>
    <variation>G</variation>
    <location>
        <position position="183"/>
    </location>
</feature>
<feature type="sequence conflict" description="In Ref. 1; AAC39013." evidence="5" ref="1">
    <original>E</original>
    <variation>Q</variation>
    <location>
        <position position="249"/>
    </location>
</feature>
<evidence type="ECO:0000250" key="1"/>
<evidence type="ECO:0000303" key="2">
    <source>
    </source>
</evidence>
<evidence type="ECO:0000303" key="3">
    <source>
    </source>
</evidence>
<evidence type="ECO:0000303" key="4">
    <source ref="4"/>
</evidence>
<evidence type="ECO:0000305" key="5"/>
<evidence type="ECO:0000312" key="6">
    <source>
        <dbReference type="FlyBase" id="FBgn0264078"/>
    </source>
</evidence>
<reference key="1">
    <citation type="journal article" date="2000" name="Science">
        <title>The genome sequence of Drosophila melanogaster.</title>
        <authorList>
            <person name="Adams M.D."/>
            <person name="Celniker S.E."/>
            <person name="Holt R.A."/>
            <person name="Evans C.A."/>
            <person name="Gocayne J.D."/>
            <person name="Amanatides P.G."/>
            <person name="Scherer S.E."/>
            <person name="Li P.W."/>
            <person name="Hoskins R.A."/>
            <person name="Galle R.F."/>
            <person name="George R.A."/>
            <person name="Lewis S.E."/>
            <person name="Richards S."/>
            <person name="Ashburner M."/>
            <person name="Henderson S.N."/>
            <person name="Sutton G.G."/>
            <person name="Wortman J.R."/>
            <person name="Yandell M.D."/>
            <person name="Zhang Q."/>
            <person name="Chen L.X."/>
            <person name="Brandon R.C."/>
            <person name="Rogers Y.-H.C."/>
            <person name="Blazej R.G."/>
            <person name="Champe M."/>
            <person name="Pfeiffer B.D."/>
            <person name="Wan K.H."/>
            <person name="Doyle C."/>
            <person name="Baxter E.G."/>
            <person name="Helt G."/>
            <person name="Nelson C.R."/>
            <person name="Miklos G.L.G."/>
            <person name="Abril J.F."/>
            <person name="Agbayani A."/>
            <person name="An H.-J."/>
            <person name="Andrews-Pfannkoch C."/>
            <person name="Baldwin D."/>
            <person name="Ballew R.M."/>
            <person name="Basu A."/>
            <person name="Baxendale J."/>
            <person name="Bayraktaroglu L."/>
            <person name="Beasley E.M."/>
            <person name="Beeson K.Y."/>
            <person name="Benos P.V."/>
            <person name="Berman B.P."/>
            <person name="Bhandari D."/>
            <person name="Bolshakov S."/>
            <person name="Borkova D."/>
            <person name="Botchan M.R."/>
            <person name="Bouck J."/>
            <person name="Brokstein P."/>
            <person name="Brottier P."/>
            <person name="Burtis K.C."/>
            <person name="Busam D.A."/>
            <person name="Butler H."/>
            <person name="Cadieu E."/>
            <person name="Center A."/>
            <person name="Chandra I."/>
            <person name="Cherry J.M."/>
            <person name="Cawley S."/>
            <person name="Dahlke C."/>
            <person name="Davenport L.B."/>
            <person name="Davies P."/>
            <person name="de Pablos B."/>
            <person name="Delcher A."/>
            <person name="Deng Z."/>
            <person name="Mays A.D."/>
            <person name="Dew I."/>
            <person name="Dietz S.M."/>
            <person name="Dodson K."/>
            <person name="Doup L.E."/>
            <person name="Downes M."/>
            <person name="Dugan-Rocha S."/>
            <person name="Dunkov B.C."/>
            <person name="Dunn P."/>
            <person name="Durbin K.J."/>
            <person name="Evangelista C.C."/>
            <person name="Ferraz C."/>
            <person name="Ferriera S."/>
            <person name="Fleischmann W."/>
            <person name="Fosler C."/>
            <person name="Gabrielian A.E."/>
            <person name="Garg N.S."/>
            <person name="Gelbart W.M."/>
            <person name="Glasser K."/>
            <person name="Glodek A."/>
            <person name="Gong F."/>
            <person name="Gorrell J.H."/>
            <person name="Gu Z."/>
            <person name="Guan P."/>
            <person name="Harris M."/>
            <person name="Harris N.L."/>
            <person name="Harvey D.A."/>
            <person name="Heiman T.J."/>
            <person name="Hernandez J.R."/>
            <person name="Houck J."/>
            <person name="Hostin D."/>
            <person name="Houston K.A."/>
            <person name="Howland T.J."/>
            <person name="Wei M.-H."/>
            <person name="Ibegwam C."/>
            <person name="Jalali M."/>
            <person name="Kalush F."/>
            <person name="Karpen G.H."/>
            <person name="Ke Z."/>
            <person name="Kennison J.A."/>
            <person name="Ketchum K.A."/>
            <person name="Kimmel B.E."/>
            <person name="Kodira C.D."/>
            <person name="Kraft C.L."/>
            <person name="Kravitz S."/>
            <person name="Kulp D."/>
            <person name="Lai Z."/>
            <person name="Lasko P."/>
            <person name="Lei Y."/>
            <person name="Levitsky A.A."/>
            <person name="Li J.H."/>
            <person name="Li Z."/>
            <person name="Liang Y."/>
            <person name="Lin X."/>
            <person name="Liu X."/>
            <person name="Mattei B."/>
            <person name="McIntosh T.C."/>
            <person name="McLeod M.P."/>
            <person name="McPherson D."/>
            <person name="Merkulov G."/>
            <person name="Milshina N.V."/>
            <person name="Mobarry C."/>
            <person name="Morris J."/>
            <person name="Moshrefi A."/>
            <person name="Mount S.M."/>
            <person name="Moy M."/>
            <person name="Murphy B."/>
            <person name="Murphy L."/>
            <person name="Muzny D.M."/>
            <person name="Nelson D.L."/>
            <person name="Nelson D.R."/>
            <person name="Nelson K.A."/>
            <person name="Nixon K."/>
            <person name="Nusskern D.R."/>
            <person name="Pacleb J.M."/>
            <person name="Palazzolo M."/>
            <person name="Pittman G.S."/>
            <person name="Pan S."/>
            <person name="Pollard J."/>
            <person name="Puri V."/>
            <person name="Reese M.G."/>
            <person name="Reinert K."/>
            <person name="Remington K."/>
            <person name="Saunders R.D.C."/>
            <person name="Scheeler F."/>
            <person name="Shen H."/>
            <person name="Shue B.C."/>
            <person name="Siden-Kiamos I."/>
            <person name="Simpson M."/>
            <person name="Skupski M.P."/>
            <person name="Smith T.J."/>
            <person name="Spier E."/>
            <person name="Spradling A.C."/>
            <person name="Stapleton M."/>
            <person name="Strong R."/>
            <person name="Sun E."/>
            <person name="Svirskas R."/>
            <person name="Tector C."/>
            <person name="Turner R."/>
            <person name="Venter E."/>
            <person name="Wang A.H."/>
            <person name="Wang X."/>
            <person name="Wang Z.-Y."/>
            <person name="Wassarman D.A."/>
            <person name="Weinstock G.M."/>
            <person name="Weissenbach J."/>
            <person name="Williams S.M."/>
            <person name="Woodage T."/>
            <person name="Worley K.C."/>
            <person name="Wu D."/>
            <person name="Yang S."/>
            <person name="Yao Q.A."/>
            <person name="Ye J."/>
            <person name="Yeh R.-F."/>
            <person name="Zaveri J.S."/>
            <person name="Zhan M."/>
            <person name="Zhang G."/>
            <person name="Zhao Q."/>
            <person name="Zheng L."/>
            <person name="Zheng X.H."/>
            <person name="Zhong F.N."/>
            <person name="Zhong W."/>
            <person name="Zhou X."/>
            <person name="Zhu S.C."/>
            <person name="Zhu X."/>
            <person name="Smith H.O."/>
            <person name="Gibbs R.A."/>
            <person name="Myers E.W."/>
            <person name="Rubin G.M."/>
            <person name="Venter J.C."/>
        </authorList>
    </citation>
    <scope>NUCLEOTIDE SEQUENCE [LARGE SCALE GENOMIC DNA]</scope>
    <source>
        <strain>Berkeley</strain>
    </source>
</reference>
<reference key="2">
    <citation type="journal article" date="2002" name="Genome Biol.">
        <title>Annotation of the Drosophila melanogaster euchromatic genome: a systematic review.</title>
        <authorList>
            <person name="Misra S."/>
            <person name="Crosby M.A."/>
            <person name="Mungall C.J."/>
            <person name="Matthews B.B."/>
            <person name="Campbell K.S."/>
            <person name="Hradecky P."/>
            <person name="Huang Y."/>
            <person name="Kaminker J.S."/>
            <person name="Millburn G.H."/>
            <person name="Prochnik S.E."/>
            <person name="Smith C.D."/>
            <person name="Tupy J.L."/>
            <person name="Whitfield E.J."/>
            <person name="Bayraktaroglu L."/>
            <person name="Berman B.P."/>
            <person name="Bettencourt B.R."/>
            <person name="Celniker S.E."/>
            <person name="de Grey A.D.N.J."/>
            <person name="Drysdale R.A."/>
            <person name="Harris N.L."/>
            <person name="Richter J."/>
            <person name="Russo S."/>
            <person name="Schroeder A.J."/>
            <person name="Shu S.Q."/>
            <person name="Stapleton M."/>
            <person name="Yamada C."/>
            <person name="Ashburner M."/>
            <person name="Gelbart W.M."/>
            <person name="Rubin G.M."/>
            <person name="Lewis S.E."/>
        </authorList>
    </citation>
    <scope>GENOME REANNOTATION</scope>
    <scope>ALTERNATIVE SPLICING</scope>
    <source>
        <strain>Berkeley</strain>
    </source>
</reference>
<reference key="3">
    <citation type="journal article" date="2002" name="Genome Biol.">
        <title>A Drosophila full-length cDNA resource.</title>
        <authorList>
            <person name="Stapleton M."/>
            <person name="Carlson J.W."/>
            <person name="Brokstein P."/>
            <person name="Yu C."/>
            <person name="Champe M."/>
            <person name="George R.A."/>
            <person name="Guarin H."/>
            <person name="Kronmiller B."/>
            <person name="Pacleb J.M."/>
            <person name="Park S."/>
            <person name="Wan K.H."/>
            <person name="Rubin G.M."/>
            <person name="Celniker S.E."/>
        </authorList>
    </citation>
    <scope>NUCLEOTIDE SEQUENCE [LARGE SCALE MRNA] (ISOFORM C)</scope>
    <source>
        <strain>Berkeley</strain>
        <tissue>Larva</tissue>
        <tissue>Pupae</tissue>
    </source>
</reference>
<reference key="4">
    <citation type="submission" date="2003-08" db="EMBL/GenBank/DDBJ databases">
        <authorList>
            <person name="Stapleton M."/>
            <person name="Brokstein P."/>
            <person name="Hong L."/>
            <person name="Agbayani A."/>
            <person name="Carlson J.W."/>
            <person name="Champe M."/>
            <person name="Chavez C."/>
            <person name="Dorsett V."/>
            <person name="Dresnek D."/>
            <person name="Farfan D."/>
            <person name="Frise E."/>
            <person name="George R.A."/>
            <person name="Gonzalez M."/>
            <person name="Guarin H."/>
            <person name="Kronmiller B."/>
            <person name="Li P.W."/>
            <person name="Liao G."/>
            <person name="Miranda A."/>
            <person name="Mungall C.J."/>
            <person name="Nunoo J."/>
            <person name="Pacleb J.M."/>
            <person name="Paragas V."/>
            <person name="Park S."/>
            <person name="Patel S."/>
            <person name="Phouanenavong S."/>
            <person name="Wan K.H."/>
            <person name="Yu C."/>
            <person name="Lewis S.E."/>
            <person name="Rubin G.M."/>
            <person name="Celniker S.E."/>
        </authorList>
    </citation>
    <scope>NUCLEOTIDE SEQUENCE [MRNA] (ISOFORM B)</scope>
    <source>
        <strain>Berkeley</strain>
        <tissue>Embryo</tissue>
    </source>
</reference>
<reference key="5">
    <citation type="journal article" date="1998" name="Gene">
        <title>Identification, sequence and developmental expression of invertebrate flotillins from Drosophila melanogaster.</title>
        <authorList>
            <person name="Galbiati F."/>
            <person name="Volonte D."/>
            <person name="Goltz J.S."/>
            <person name="Steele Z."/>
            <person name="Sen J."/>
            <person name="Jurcsak J."/>
            <person name="Stein D."/>
            <person name="Stevens L."/>
            <person name="Lisanti M.P."/>
        </authorList>
    </citation>
    <scope>NUCLEOTIDE SEQUENCE [MRNA] OF 50-438 (ISOFORM B)</scope>
</reference>
<gene>
    <name evidence="6" type="primary">Flo2</name>
    <name evidence="6" type="synonym">Flo-2</name>
    <name type="synonym">FLODm-2</name>
    <name evidence="6" type="ORF">CG32593</name>
</gene>
<sequence length="438" mass="48158">MGNIHTTGPNEALIVSGGCCGSTKKRTIVGGWAWAWWLVTDVQRLSLNVMTLNPMCENVETSQGVPLTVTGVAQCKIMKSSSYKQTDYHNDEADELLGTASEQFLGKSVKEIKQTILQTLEGHLRAILGTLTVEEVYKDRDQFAALVREVAAPDVGRMGIEILSFTIKDVYDDVQYLASLGKAQTAVVKRDADAGVAEANRDAGIREAECEKSAMDVKYSTDTKIEDNTRMYKLQKANFDQEINTAKAESQLAYELQAAKIRQRIRNEEIQIEVVERRKQIEIESQEVQRKDRELTGTVKLPAEAEAFRLQTLAQAKQCQTIEGARAEAERIRKIGSAEAHAIELVGKAEAERMRMKAHVYKQYGDAAIMNIVLESLPKIAAEVAAPLAKTDEIVLIGGNDNITNDVTRLVAQLPPSINALTGVDLSKVLSKIPGAKA</sequence>
<protein>
    <recommendedName>
        <fullName>Flotillin-2</fullName>
    </recommendedName>
</protein>
<dbReference type="EMBL" id="AE014298">
    <property type="protein sequence ID" value="AAF48407.2"/>
    <property type="molecule type" value="Genomic_DNA"/>
</dbReference>
<dbReference type="EMBL" id="AE014298">
    <property type="protein sequence ID" value="AAN09343.1"/>
    <property type="molecule type" value="Genomic_DNA"/>
</dbReference>
<dbReference type="EMBL" id="AE014298">
    <property type="protein sequence ID" value="AAN09346.1"/>
    <property type="molecule type" value="Genomic_DNA"/>
</dbReference>
<dbReference type="EMBL" id="AE014298">
    <property type="protein sequence ID" value="AAN09348.1"/>
    <property type="molecule type" value="Genomic_DNA"/>
</dbReference>
<dbReference type="EMBL" id="AY069755">
    <property type="protein sequence ID" value="AAL39900.1"/>
    <property type="molecule type" value="mRNA"/>
</dbReference>
<dbReference type="EMBL" id="BT009962">
    <property type="protein sequence ID" value="AAQ22431.1"/>
    <property type="molecule type" value="mRNA"/>
</dbReference>
<dbReference type="EMBL" id="AF044916">
    <property type="protein sequence ID" value="AAC39013.1"/>
    <property type="molecule type" value="mRNA"/>
</dbReference>
<dbReference type="RefSeq" id="NP_001162759.1">
    <molecule id="O61492-4"/>
    <property type="nucleotide sequence ID" value="NM_001169288.1"/>
</dbReference>
<dbReference type="RefSeq" id="NP_001259555.1">
    <molecule id="O61492-1"/>
    <property type="nucleotide sequence ID" value="NM_001272626.2"/>
</dbReference>
<dbReference type="RefSeq" id="NP_511157.2">
    <molecule id="O61492-2"/>
    <property type="nucleotide sequence ID" value="NM_078602.4"/>
</dbReference>
<dbReference type="RefSeq" id="NP_727797.1">
    <molecule id="O61492-1"/>
    <property type="nucleotide sequence ID" value="NM_167415.3"/>
</dbReference>
<dbReference type="RefSeq" id="NP_727798.1">
    <molecule id="O61492-1"/>
    <property type="nucleotide sequence ID" value="NM_167416.3"/>
</dbReference>
<dbReference type="RefSeq" id="NP_727799.1">
    <molecule id="O61492-2"/>
    <property type="nucleotide sequence ID" value="NM_167417.3"/>
</dbReference>
<dbReference type="RefSeq" id="NP_727812.2">
    <property type="nucleotide sequence ID" value="NM_167419.2"/>
</dbReference>
<dbReference type="RefSeq" id="NP_727814.1">
    <molecule id="O61492-4"/>
    <property type="nucleotide sequence ID" value="NM_167421.2"/>
</dbReference>
<dbReference type="SMR" id="O61492"/>
<dbReference type="BioGRID" id="58783">
    <property type="interactions" value="19"/>
</dbReference>
<dbReference type="FunCoup" id="O61492">
    <property type="interactions" value="388"/>
</dbReference>
<dbReference type="IntAct" id="O61492">
    <property type="interactions" value="43"/>
</dbReference>
<dbReference type="STRING" id="7227.FBpp0303248"/>
<dbReference type="PaxDb" id="7227-FBpp0303248"/>
<dbReference type="DNASU" id="32425"/>
<dbReference type="EnsemblMetazoa" id="FBtr0073949">
    <molecule id="O61492-1"/>
    <property type="protein sequence ID" value="FBpp0073766"/>
    <property type="gene ID" value="FBgn0264078"/>
</dbReference>
<dbReference type="EnsemblMetazoa" id="FBtr0073950">
    <molecule id="O61492-2"/>
    <property type="protein sequence ID" value="FBpp0073767"/>
    <property type="gene ID" value="FBgn0264078"/>
</dbReference>
<dbReference type="EnsemblMetazoa" id="FBtr0073951">
    <molecule id="O61492-1"/>
    <property type="protein sequence ID" value="FBpp0073768"/>
    <property type="gene ID" value="FBgn0264078"/>
</dbReference>
<dbReference type="EnsemblMetazoa" id="FBtr0073952">
    <molecule id="O61492-2"/>
    <property type="protein sequence ID" value="FBpp0073769"/>
    <property type="gene ID" value="FBgn0264078"/>
</dbReference>
<dbReference type="EnsemblMetazoa" id="FBtr0073954">
    <molecule id="O61492-4"/>
    <property type="protein sequence ID" value="FBpp0073771"/>
    <property type="gene ID" value="FBgn0264078"/>
</dbReference>
<dbReference type="EnsemblMetazoa" id="FBtr0300435">
    <molecule id="O61492-4"/>
    <property type="protein sequence ID" value="FBpp0289664"/>
    <property type="gene ID" value="FBgn0264078"/>
</dbReference>
<dbReference type="EnsemblMetazoa" id="FBtr0330216">
    <molecule id="O61492-1"/>
    <property type="protein sequence ID" value="FBpp0303249"/>
    <property type="gene ID" value="FBgn0264078"/>
</dbReference>
<dbReference type="GeneID" id="32425"/>
<dbReference type="KEGG" id="dme:Dmel_CG32593"/>
<dbReference type="AGR" id="FB:FBgn0264078"/>
<dbReference type="CTD" id="32425"/>
<dbReference type="FlyBase" id="FBgn0264078">
    <property type="gene designation" value="Flo2"/>
</dbReference>
<dbReference type="VEuPathDB" id="VectorBase:FBgn0264078"/>
<dbReference type="eggNOG" id="KOG2668">
    <property type="taxonomic scope" value="Eukaryota"/>
</dbReference>
<dbReference type="GeneTree" id="ENSGT00560000077232"/>
<dbReference type="InParanoid" id="O61492"/>
<dbReference type="OrthoDB" id="6080404at2759"/>
<dbReference type="PhylomeDB" id="O61492"/>
<dbReference type="Reactome" id="R-DME-8849932">
    <property type="pathway name" value="Synaptic adhesion-like molecules"/>
</dbReference>
<dbReference type="Reactome" id="R-DME-8980692">
    <property type="pathway name" value="RHOA GTPase cycle"/>
</dbReference>
<dbReference type="Reactome" id="R-DME-9013026">
    <property type="pathway name" value="RHOB GTPase cycle"/>
</dbReference>
<dbReference type="SignaLink" id="O61492"/>
<dbReference type="BioGRID-ORCS" id="32425">
    <property type="hits" value="0 hits in 1 CRISPR screen"/>
</dbReference>
<dbReference type="ChiTaRS" id="Flo2">
    <property type="organism name" value="fly"/>
</dbReference>
<dbReference type="GenomeRNAi" id="32425"/>
<dbReference type="PRO" id="PR:O61492"/>
<dbReference type="Proteomes" id="UP000000803">
    <property type="component" value="Chromosome X"/>
</dbReference>
<dbReference type="Bgee" id="FBgn0264078">
    <property type="expression patterns" value="Expressed in columnar neuron T1 (Drosophila) in insect head and 270 other cell types or tissues"/>
</dbReference>
<dbReference type="ExpressionAtlas" id="O61492">
    <property type="expression patterns" value="baseline and differential"/>
</dbReference>
<dbReference type="GO" id="GO:0005737">
    <property type="term" value="C:cytoplasm"/>
    <property type="evidence" value="ECO:0007005"/>
    <property type="project" value="FlyBase"/>
</dbReference>
<dbReference type="GO" id="GO:0031410">
    <property type="term" value="C:cytoplasmic vesicle"/>
    <property type="evidence" value="ECO:0000318"/>
    <property type="project" value="GO_Central"/>
</dbReference>
<dbReference type="GO" id="GO:0005829">
    <property type="term" value="C:cytosol"/>
    <property type="evidence" value="ECO:0007005"/>
    <property type="project" value="FlyBase"/>
</dbReference>
<dbReference type="GO" id="GO:0016600">
    <property type="term" value="C:flotillin complex"/>
    <property type="evidence" value="ECO:0000318"/>
    <property type="project" value="GO_Central"/>
</dbReference>
<dbReference type="GO" id="GO:0005886">
    <property type="term" value="C:plasma membrane"/>
    <property type="evidence" value="ECO:0007005"/>
    <property type="project" value="FlyBase"/>
</dbReference>
<dbReference type="GO" id="GO:0002020">
    <property type="term" value="F:protease binding"/>
    <property type="evidence" value="ECO:0000318"/>
    <property type="project" value="GO_Central"/>
</dbReference>
<dbReference type="GO" id="GO:0005198">
    <property type="term" value="F:structural molecule activity"/>
    <property type="evidence" value="ECO:0000303"/>
    <property type="project" value="UniProtKB"/>
</dbReference>
<dbReference type="GO" id="GO:0007155">
    <property type="term" value="P:cell adhesion"/>
    <property type="evidence" value="ECO:0000303"/>
    <property type="project" value="UniProtKB"/>
</dbReference>
<dbReference type="GO" id="GO:0035011">
    <property type="term" value="P:melanotic encapsulation of foreign target"/>
    <property type="evidence" value="ECO:0000315"/>
    <property type="project" value="FlyBase"/>
</dbReference>
<dbReference type="GO" id="GO:0051491">
    <property type="term" value="P:positive regulation of filopodium assembly"/>
    <property type="evidence" value="ECO:0000314"/>
    <property type="project" value="FlyBase"/>
</dbReference>
<dbReference type="GO" id="GO:0072659">
    <property type="term" value="P:protein localization to plasma membrane"/>
    <property type="evidence" value="ECO:0000318"/>
    <property type="project" value="GO_Central"/>
</dbReference>
<dbReference type="GO" id="GO:0045661">
    <property type="term" value="P:regulation of myoblast differentiation"/>
    <property type="evidence" value="ECO:0000318"/>
    <property type="project" value="GO_Central"/>
</dbReference>
<dbReference type="CDD" id="cd03399">
    <property type="entry name" value="SPFH_flotillin"/>
    <property type="match status" value="1"/>
</dbReference>
<dbReference type="Gene3D" id="3.30.479.30">
    <property type="entry name" value="Band 7 domain"/>
    <property type="match status" value="1"/>
</dbReference>
<dbReference type="InterPro" id="IPR001107">
    <property type="entry name" value="Band_7"/>
</dbReference>
<dbReference type="InterPro" id="IPR036013">
    <property type="entry name" value="Band_7/SPFH_dom_sf"/>
</dbReference>
<dbReference type="InterPro" id="IPR027705">
    <property type="entry name" value="Flotillin_fam"/>
</dbReference>
<dbReference type="PANTHER" id="PTHR13806:SF46">
    <property type="entry name" value="FLOTILLIN-1-RELATED"/>
    <property type="match status" value="1"/>
</dbReference>
<dbReference type="PANTHER" id="PTHR13806">
    <property type="entry name" value="FLOTILLIN-RELATED"/>
    <property type="match status" value="1"/>
</dbReference>
<dbReference type="Pfam" id="PF01145">
    <property type="entry name" value="Band_7"/>
    <property type="match status" value="1"/>
</dbReference>
<dbReference type="SMART" id="SM00244">
    <property type="entry name" value="PHB"/>
    <property type="match status" value="1"/>
</dbReference>
<dbReference type="SUPFAM" id="SSF117892">
    <property type="entry name" value="Band 7/SPFH domain"/>
    <property type="match status" value="1"/>
</dbReference>
<accession>O61492</accession>
<accession>Q0KHS9</accession>
<accession>Q8SZW0</accession>
<accession>Q9I7S0</accession>
<accession>Q9VXZ9</accession>
<proteinExistence type="evidence at transcript level"/>